<sequence>MTRIAINGFGRIGRNVLRALLERDSDLDVVAVNDLTEPATLARLLAYDTTSGRLGRPVTVEGNVLVVDGRRITVTAEREPANLPWAELGVDIVLEATGRFTSAKAARAHLDAGAKKVLVSAPADGADITLAFGVNTDAYDPDLHTIVSNASCTTNALAPLAKVLDDLAGIEHGFMTTVHAYTQEQNLQDGPHRDPRRARAAAVNIVPTTTGAAKAIGLVLPNLDGKLSGDSIRVPVPVGSIVELNTTVARDVTRDEVLDAYRAAAQGPLAGVLEYSEDPLVSSDITGNPASSIFDSELTRVDGRHIKVVAWYDNEWGFSNRVIDTLQLLAAR</sequence>
<proteinExistence type="inferred from homology"/>
<evidence type="ECO:0000250" key="1">
    <source>
        <dbReference type="UniProtKB" id="P00362"/>
    </source>
</evidence>
<evidence type="ECO:0000250" key="2">
    <source>
        <dbReference type="UniProtKB" id="P54226"/>
    </source>
</evidence>
<evidence type="ECO:0000250" key="3">
    <source>
        <dbReference type="UniProtKB" id="P9WN83"/>
    </source>
</evidence>
<evidence type="ECO:0000305" key="4"/>
<organism>
    <name type="scientific">Kitasatospora aureofaciens</name>
    <name type="common">Streptomyces aureofaciens</name>
    <dbReference type="NCBI Taxonomy" id="1894"/>
    <lineage>
        <taxon>Bacteria</taxon>
        <taxon>Bacillati</taxon>
        <taxon>Actinomycetota</taxon>
        <taxon>Actinomycetes</taxon>
        <taxon>Kitasatosporales</taxon>
        <taxon>Streptomycetaceae</taxon>
        <taxon>Kitasatospora</taxon>
    </lineage>
</organism>
<accession>Q59800</accession>
<dbReference type="EC" id="1.2.1.12" evidence="3"/>
<dbReference type="EMBL" id="U21191">
    <property type="protein sequence ID" value="AAA91364.1"/>
    <property type="molecule type" value="Genomic_DNA"/>
</dbReference>
<dbReference type="PIR" id="JC4373">
    <property type="entry name" value="JC4373"/>
</dbReference>
<dbReference type="SMR" id="Q59800"/>
<dbReference type="UniPathway" id="UPA00109">
    <property type="reaction ID" value="UER00184"/>
</dbReference>
<dbReference type="GO" id="GO:0005737">
    <property type="term" value="C:cytoplasm"/>
    <property type="evidence" value="ECO:0007669"/>
    <property type="project" value="UniProtKB-SubCell"/>
</dbReference>
<dbReference type="GO" id="GO:0004365">
    <property type="term" value="F:glyceraldehyde-3-phosphate dehydrogenase (NAD+) (phosphorylating) activity"/>
    <property type="evidence" value="ECO:0000250"/>
    <property type="project" value="UniProtKB"/>
</dbReference>
<dbReference type="GO" id="GO:0051287">
    <property type="term" value="F:NAD binding"/>
    <property type="evidence" value="ECO:0000250"/>
    <property type="project" value="UniProtKB"/>
</dbReference>
<dbReference type="GO" id="GO:0050661">
    <property type="term" value="F:NADP binding"/>
    <property type="evidence" value="ECO:0007669"/>
    <property type="project" value="InterPro"/>
</dbReference>
<dbReference type="GO" id="GO:0006006">
    <property type="term" value="P:glucose metabolic process"/>
    <property type="evidence" value="ECO:0007669"/>
    <property type="project" value="InterPro"/>
</dbReference>
<dbReference type="GO" id="GO:0006096">
    <property type="term" value="P:glycolytic process"/>
    <property type="evidence" value="ECO:0007669"/>
    <property type="project" value="UniProtKB-UniPathway"/>
</dbReference>
<dbReference type="CDD" id="cd18126">
    <property type="entry name" value="GAPDH_I_C"/>
    <property type="match status" value="1"/>
</dbReference>
<dbReference type="CDD" id="cd05214">
    <property type="entry name" value="GAPDH_I_N"/>
    <property type="match status" value="1"/>
</dbReference>
<dbReference type="FunFam" id="3.30.360.10:FF:000002">
    <property type="entry name" value="Glyceraldehyde-3-phosphate dehydrogenase"/>
    <property type="match status" value="1"/>
</dbReference>
<dbReference type="FunFam" id="3.40.50.720:FF:000001">
    <property type="entry name" value="Glyceraldehyde-3-phosphate dehydrogenase"/>
    <property type="match status" value="1"/>
</dbReference>
<dbReference type="Gene3D" id="3.30.360.10">
    <property type="entry name" value="Dihydrodipicolinate Reductase, domain 2"/>
    <property type="match status" value="1"/>
</dbReference>
<dbReference type="Gene3D" id="3.40.50.720">
    <property type="entry name" value="NAD(P)-binding Rossmann-like Domain"/>
    <property type="match status" value="1"/>
</dbReference>
<dbReference type="InterPro" id="IPR020831">
    <property type="entry name" value="GlycerAld/Erythrose_P_DH"/>
</dbReference>
<dbReference type="InterPro" id="IPR020830">
    <property type="entry name" value="GlycerAld_3-P_DH_AS"/>
</dbReference>
<dbReference type="InterPro" id="IPR020829">
    <property type="entry name" value="GlycerAld_3-P_DH_cat"/>
</dbReference>
<dbReference type="InterPro" id="IPR020828">
    <property type="entry name" value="GlycerAld_3-P_DH_NAD(P)-bd"/>
</dbReference>
<dbReference type="InterPro" id="IPR006424">
    <property type="entry name" value="Glyceraldehyde-3-P_DH_1"/>
</dbReference>
<dbReference type="InterPro" id="IPR036291">
    <property type="entry name" value="NAD(P)-bd_dom_sf"/>
</dbReference>
<dbReference type="NCBIfam" id="TIGR01534">
    <property type="entry name" value="GAPDH-I"/>
    <property type="match status" value="1"/>
</dbReference>
<dbReference type="PANTHER" id="PTHR43148">
    <property type="entry name" value="GLYCERALDEHYDE-3-PHOSPHATE DEHYDROGENASE 2"/>
    <property type="match status" value="1"/>
</dbReference>
<dbReference type="Pfam" id="PF02800">
    <property type="entry name" value="Gp_dh_C"/>
    <property type="match status" value="1"/>
</dbReference>
<dbReference type="Pfam" id="PF00044">
    <property type="entry name" value="Gp_dh_N"/>
    <property type="match status" value="1"/>
</dbReference>
<dbReference type="PIRSF" id="PIRSF000149">
    <property type="entry name" value="GAP_DH"/>
    <property type="match status" value="1"/>
</dbReference>
<dbReference type="PRINTS" id="PR00078">
    <property type="entry name" value="G3PDHDRGNASE"/>
</dbReference>
<dbReference type="SMART" id="SM00846">
    <property type="entry name" value="Gp_dh_N"/>
    <property type="match status" value="1"/>
</dbReference>
<dbReference type="SUPFAM" id="SSF55347">
    <property type="entry name" value="Glyceraldehyde-3-phosphate dehydrogenase-like, C-terminal domain"/>
    <property type="match status" value="1"/>
</dbReference>
<dbReference type="SUPFAM" id="SSF51735">
    <property type="entry name" value="NAD(P)-binding Rossmann-fold domains"/>
    <property type="match status" value="1"/>
</dbReference>
<dbReference type="PROSITE" id="PS00071">
    <property type="entry name" value="GAPDH"/>
    <property type="match status" value="1"/>
</dbReference>
<reference key="1">
    <citation type="journal article" date="1995" name="Gene">
        <title>Cloning, sequencing and expression in Escherichia coli of a Streptomyces aureofaciens gene encoding glyceraldehyde-3-phosphate dehydrogenase.</title>
        <authorList>
            <person name="Kormanec J."/>
            <person name="Lempelova A."/>
            <person name="Farkasovsky M."/>
            <person name="Homerova D."/>
        </authorList>
    </citation>
    <scope>NUCLEOTIDE SEQUENCE [GENOMIC DNA]</scope>
    <source>
        <strain>ATCC 10762 / DSM 40127 / CCM 3239 / JCM 4008 / LMG 5968 / NBRC 12843 / NCIMB 8234 / A-377</strain>
    </source>
</reference>
<name>G3P_KITAU</name>
<keyword id="KW-0963">Cytoplasm</keyword>
<keyword id="KW-0324">Glycolysis</keyword>
<keyword id="KW-0520">NAD</keyword>
<keyword id="KW-0547">Nucleotide-binding</keyword>
<keyword id="KW-0560">Oxidoreductase</keyword>
<comment type="function">
    <text evidence="3">Catalyzes the oxidative phosphorylation of glyceraldehyde 3-phosphate (G3P) to 1,3-bisphosphoglycerate (BPG) using the cofactor NAD. The first reaction step involves the formation of a hemiacetal intermediate between G3P and a cysteine residue, and this hemiacetal intermediate is then oxidized to a thioester, with concomitant reduction of NAD to NADH. The reduced NADH is then exchanged with the second NAD, and the thioester is attacked by a nucleophilic inorganic phosphate to produce BPG.</text>
</comment>
<comment type="catalytic activity">
    <reaction evidence="3">
        <text>D-glyceraldehyde 3-phosphate + phosphate + NAD(+) = (2R)-3-phospho-glyceroyl phosphate + NADH + H(+)</text>
        <dbReference type="Rhea" id="RHEA:10300"/>
        <dbReference type="ChEBI" id="CHEBI:15378"/>
        <dbReference type="ChEBI" id="CHEBI:43474"/>
        <dbReference type="ChEBI" id="CHEBI:57540"/>
        <dbReference type="ChEBI" id="CHEBI:57604"/>
        <dbReference type="ChEBI" id="CHEBI:57945"/>
        <dbReference type="ChEBI" id="CHEBI:59776"/>
        <dbReference type="EC" id="1.2.1.12"/>
    </reaction>
</comment>
<comment type="pathway">
    <text evidence="4">Carbohydrate degradation; glycolysis; pyruvate from D-glyceraldehyde 3-phosphate: step 1/5.</text>
</comment>
<comment type="subunit">
    <text evidence="2">Homotetramer.</text>
</comment>
<comment type="subcellular location">
    <subcellularLocation>
        <location evidence="4">Cytoplasm</location>
    </subcellularLocation>
</comment>
<comment type="similarity">
    <text evidence="4">Belongs to the glyceraldehyde-3-phosphate dehydrogenase family.</text>
</comment>
<gene>
    <name type="primary">gap</name>
</gene>
<feature type="chain" id="PRO_0000145700" description="Glyceraldehyde-3-phosphate dehydrogenase">
    <location>
        <begin position="1"/>
        <end position="332"/>
    </location>
</feature>
<feature type="active site" description="Nucleophile" evidence="1">
    <location>
        <position position="152"/>
    </location>
</feature>
<feature type="binding site" evidence="1">
    <location>
        <begin position="11"/>
        <end position="12"/>
    </location>
    <ligand>
        <name>NAD(+)</name>
        <dbReference type="ChEBI" id="CHEBI:57540"/>
    </ligand>
</feature>
<feature type="binding site" evidence="1">
    <location>
        <position position="34"/>
    </location>
    <ligand>
        <name>NAD(+)</name>
        <dbReference type="ChEBI" id="CHEBI:57540"/>
    </ligand>
</feature>
<feature type="binding site" evidence="1">
    <location>
        <position position="78"/>
    </location>
    <ligand>
        <name>NAD(+)</name>
        <dbReference type="ChEBI" id="CHEBI:57540"/>
    </ligand>
</feature>
<feature type="binding site" evidence="1">
    <location>
        <position position="120"/>
    </location>
    <ligand>
        <name>NAD(+)</name>
        <dbReference type="ChEBI" id="CHEBI:57540"/>
    </ligand>
</feature>
<feature type="binding site" evidence="1">
    <location>
        <begin position="151"/>
        <end position="153"/>
    </location>
    <ligand>
        <name>D-glyceraldehyde 3-phosphate</name>
        <dbReference type="ChEBI" id="CHEBI:59776"/>
    </ligand>
</feature>
<feature type="binding site" evidence="1">
    <location>
        <position position="182"/>
    </location>
    <ligand>
        <name>D-glyceraldehyde 3-phosphate</name>
        <dbReference type="ChEBI" id="CHEBI:59776"/>
    </ligand>
</feature>
<feature type="binding site" evidence="1">
    <location>
        <position position="197"/>
    </location>
    <ligand>
        <name>D-glyceraldehyde 3-phosphate</name>
        <dbReference type="ChEBI" id="CHEBI:59776"/>
    </ligand>
</feature>
<feature type="binding site" evidence="1">
    <location>
        <begin position="210"/>
        <end position="211"/>
    </location>
    <ligand>
        <name>D-glyceraldehyde 3-phosphate</name>
        <dbReference type="ChEBI" id="CHEBI:59776"/>
    </ligand>
</feature>
<feature type="binding site" evidence="1">
    <location>
        <position position="233"/>
    </location>
    <ligand>
        <name>D-glyceraldehyde 3-phosphate</name>
        <dbReference type="ChEBI" id="CHEBI:59776"/>
    </ligand>
</feature>
<feature type="binding site" evidence="1">
    <location>
        <position position="314"/>
    </location>
    <ligand>
        <name>NAD(+)</name>
        <dbReference type="ChEBI" id="CHEBI:57540"/>
    </ligand>
</feature>
<feature type="site" description="Activates thiol group during catalysis" evidence="1">
    <location>
        <position position="179"/>
    </location>
</feature>
<protein>
    <recommendedName>
        <fullName evidence="3">Glyceraldehyde-3-phosphate dehydrogenase</fullName>
        <shortName evidence="3">GAPDH</shortName>
        <ecNumber evidence="3">1.2.1.12</ecNumber>
    </recommendedName>
    <alternativeName>
        <fullName evidence="3">NAD-dependent glyceraldehyde-3-phosphate dehydrogenase</fullName>
    </alternativeName>
</protein>